<protein>
    <recommendedName>
        <fullName>Replication-associated protein</fullName>
        <ecNumber>2.7.7.-</ecNumber>
        <ecNumber>3.1.21.-</ecNumber>
        <ecNumber>3.6.1.-</ecNumber>
    </recommendedName>
    <alternativeName>
        <fullName>ATP-dependent helicase Rep</fullName>
    </alternativeName>
    <alternativeName>
        <fullName>RepP</fullName>
    </alternativeName>
</protein>
<sequence length="289" mass="33446">MPSKEGSGCRRWCFTLNNPTDGEIEFVRSLGPDEFYYAIVGREKGEQGTPHLQGYFHFKNKKRLSALKKLLPRAHFERAKGSDADNEKYCSKEGDVILTLGIVARDGHRAFDGAVAAVMSGRKMKEVAREFPEVYVRHGRGLHNLSLLVGSSPRDFKTEVDVIYGPPGCGKSRWANEQPGTKYYKMRGEWWDGYDGEDVVVLDDFYGWLPYCEMLRLCDRYPHKVPVKGAFVEFTSKRIIITSNKPPETWYKEDCDPKPLFRRFTRVWWYNVDKLEQVRPDFLAHPINY</sequence>
<name>REP_BFDV</name>
<gene>
    <name type="primary">Rep</name>
    <name type="ORF">ORF1</name>
</gene>
<keyword id="KW-0067">ATP-binding</keyword>
<keyword id="KW-0190">Covalent protein-DNA linkage</keyword>
<keyword id="KW-0235">DNA replication</keyword>
<keyword id="KW-0238">DNA-binding</keyword>
<keyword id="KW-0255">Endonuclease</keyword>
<keyword id="KW-0347">Helicase</keyword>
<keyword id="KW-1048">Host nucleus</keyword>
<keyword id="KW-0378">Hydrolase</keyword>
<keyword id="KW-0479">Metal-binding</keyword>
<keyword id="KW-0511">Multifunctional enzyme</keyword>
<keyword id="KW-0540">Nuclease</keyword>
<keyword id="KW-0547">Nucleotide-binding</keyword>
<keyword id="KW-0548">Nucleotidyltransferase</keyword>
<keyword id="KW-1185">Reference proteome</keyword>
<keyword id="KW-0808">Transferase</keyword>
<organismHost>
    <name type="scientific">Gracula</name>
    <dbReference type="NCBI Taxonomy" id="116991"/>
</organismHost>
<organismHost>
    <name type="scientific">Psittaciformes</name>
    <dbReference type="NCBI Taxonomy" id="9223"/>
</organismHost>
<dbReference type="EC" id="2.7.7.-"/>
<dbReference type="EC" id="3.1.21.-"/>
<dbReference type="EC" id="3.6.1.-"/>
<dbReference type="EMBL" id="AF080560">
    <property type="protein sequence ID" value="AAC69861.1"/>
    <property type="molecule type" value="Genomic_DNA"/>
</dbReference>
<dbReference type="SMR" id="Q9YUD3"/>
<dbReference type="Proteomes" id="UP000007454">
    <property type="component" value="Genome"/>
</dbReference>
<dbReference type="GO" id="GO:0042025">
    <property type="term" value="C:host cell nucleus"/>
    <property type="evidence" value="ECO:0007669"/>
    <property type="project" value="UniProtKB-SubCell"/>
</dbReference>
<dbReference type="GO" id="GO:0005524">
    <property type="term" value="F:ATP binding"/>
    <property type="evidence" value="ECO:0007669"/>
    <property type="project" value="UniProtKB-KW"/>
</dbReference>
<dbReference type="GO" id="GO:0016887">
    <property type="term" value="F:ATP hydrolysis activity"/>
    <property type="evidence" value="ECO:0007669"/>
    <property type="project" value="RHEA"/>
</dbReference>
<dbReference type="GO" id="GO:0003677">
    <property type="term" value="F:DNA binding"/>
    <property type="evidence" value="ECO:0007669"/>
    <property type="project" value="UniProtKB-KW"/>
</dbReference>
<dbReference type="GO" id="GO:0004519">
    <property type="term" value="F:endonuclease activity"/>
    <property type="evidence" value="ECO:0007669"/>
    <property type="project" value="UniProtKB-KW"/>
</dbReference>
<dbReference type="GO" id="GO:0046872">
    <property type="term" value="F:metal ion binding"/>
    <property type="evidence" value="ECO:0007669"/>
    <property type="project" value="UniProtKB-KW"/>
</dbReference>
<dbReference type="GO" id="GO:0016779">
    <property type="term" value="F:nucleotidyltransferase activity"/>
    <property type="evidence" value="ECO:0007669"/>
    <property type="project" value="UniProtKB-KW"/>
</dbReference>
<dbReference type="GO" id="GO:0003723">
    <property type="term" value="F:RNA binding"/>
    <property type="evidence" value="ECO:0007669"/>
    <property type="project" value="InterPro"/>
</dbReference>
<dbReference type="GO" id="GO:0003724">
    <property type="term" value="F:RNA helicase activity"/>
    <property type="evidence" value="ECO:0007669"/>
    <property type="project" value="InterPro"/>
</dbReference>
<dbReference type="GO" id="GO:0006260">
    <property type="term" value="P:DNA replication"/>
    <property type="evidence" value="ECO:0007669"/>
    <property type="project" value="UniProtKB-KW"/>
</dbReference>
<dbReference type="Gene3D" id="3.40.1310.20">
    <property type="match status" value="1"/>
</dbReference>
<dbReference type="InterPro" id="IPR049912">
    <property type="entry name" value="CRESS_DNA_REP"/>
</dbReference>
<dbReference type="InterPro" id="IPR000605">
    <property type="entry name" value="Helicase_SF3_ssDNA/RNA_vir"/>
</dbReference>
<dbReference type="InterPro" id="IPR027417">
    <property type="entry name" value="P-loop_NTPase"/>
</dbReference>
<dbReference type="Pfam" id="PF00910">
    <property type="entry name" value="RNA_helicase"/>
    <property type="match status" value="1"/>
</dbReference>
<dbReference type="Pfam" id="PF02407">
    <property type="entry name" value="Viral_Rep"/>
    <property type="match status" value="1"/>
</dbReference>
<dbReference type="SUPFAM" id="SSF52540">
    <property type="entry name" value="P-loop containing nucleoside triphosphate hydrolases"/>
    <property type="match status" value="1"/>
</dbReference>
<dbReference type="PROSITE" id="PS52020">
    <property type="entry name" value="CRESS_DNA_REP"/>
    <property type="match status" value="1"/>
</dbReference>
<reference key="1">
    <citation type="journal article" date="1998" name="Virology">
        <title>Psittacine beak and feather disease virus nucleotide sequence analysis and its relationship to porcine circovirus, plant circoviruses, and chicken anaemia virus.</title>
        <authorList>
            <person name="Bassami M.R."/>
            <person name="Berryman D."/>
            <person name="Wilcox G.E."/>
            <person name="Raidal S.R."/>
        </authorList>
    </citation>
    <scope>NUCLEOTIDE SEQUENCE [GENOMIC DNA]</scope>
</reference>
<reference key="2">
    <citation type="journal article" date="2006" name="J. Virol.">
        <title>The capsid protein of beak and feather disease virus binds to the viral DNA and is responsible for transporting the replication-associated protein into the nucleus.</title>
        <authorList>
            <person name="Heath L."/>
            <person name="Williamson A.L."/>
            <person name="Rybicki E.P."/>
        </authorList>
    </citation>
    <scope>INTERACTION WITH CAPSID PROTEIN</scope>
</reference>
<organism>
    <name type="scientific">Beak and feather disease virus</name>
    <name type="common">BFDV</name>
    <dbReference type="NCBI Taxonomy" id="77856"/>
    <lineage>
        <taxon>Viruses</taxon>
        <taxon>Monodnaviria</taxon>
        <taxon>Shotokuvirae</taxon>
        <taxon>Cressdnaviricota</taxon>
        <taxon>Arfiviricetes</taxon>
        <taxon>Cirlivirales</taxon>
        <taxon>Circoviridae</taxon>
        <taxon>Circovirus</taxon>
        <taxon>Circovirus parrot</taxon>
    </lineage>
</organism>
<accession>Q9YUD3</accession>
<proteinExistence type="evidence at protein level"/>
<comment type="function">
    <text evidence="1">Essential for the replication of viral ssDNA. The closed circular ssDNA genome is first converted to a superhelical dsDNA. Rep and/or Rep' binds a specific hairpin at the genome origin of replication. Introduces an endonucleolytic nick within the conserved sequence 5'-AGTATTAC-3' in the intergenic region of the genome, thereby initiating the rolling circle replication (RCR). Following cleavage, binds covalently to the 5'-phosphate of DNA as a tyrosyl ester. The cleavage gives rise to a free 3'-OH that serves as a primer for the cellular DNA polymerase. The polymerase synthesizes the (+) strand DNA by rolling circle mechanism. After one round of replication, a Rep-catalyzed nucleotidyl transfer reaction releases a circular single-stranded virus genome, thereby terminating the replication. Displays origin-specific DNA cleavage, nucleotidyl transferase, ATPase and helicase activities. ATPase activity is probably carried by the isoform Rep (By similarity).</text>
</comment>
<comment type="catalytic activity">
    <reaction>
        <text>ATP + H2O = ADP + phosphate + H(+)</text>
        <dbReference type="Rhea" id="RHEA:13065"/>
        <dbReference type="ChEBI" id="CHEBI:15377"/>
        <dbReference type="ChEBI" id="CHEBI:15378"/>
        <dbReference type="ChEBI" id="CHEBI:30616"/>
        <dbReference type="ChEBI" id="CHEBI:43474"/>
        <dbReference type="ChEBI" id="CHEBI:456216"/>
    </reaction>
</comment>
<comment type="cofactor">
    <cofactor evidence="1">
        <name>Mg(2+)</name>
        <dbReference type="ChEBI" id="CHEBI:18420"/>
    </cofactor>
    <cofactor evidence="1">
        <name>Mn(2+)</name>
        <dbReference type="ChEBI" id="CHEBI:29035"/>
    </cofactor>
    <text evidence="1">Divalent metal cations, possibly Mg(2+) or Mn(2+).</text>
</comment>
<comment type="subunit">
    <text evidence="4">Interacts with the capsid protein; this interaction relocates Rep into the nucleus.</text>
</comment>
<comment type="subcellular location">
    <subcellularLocation>
        <location evidence="5">Host nucleus</location>
    </subcellularLocation>
</comment>
<comment type="domain">
    <text>There are 3 rolling circle replication (RCR) motifs. RCR-2 is probably involved in metal coordination. RCR-3 is required for phosphodiester bond cleavage for initiation of RCR.</text>
</comment>
<comment type="similarity">
    <text evidence="5">Belongs to the nanoviruses/circoviruses replication-associated protein family.</text>
</comment>
<evidence type="ECO:0000250" key="1"/>
<evidence type="ECO:0000255" key="2"/>
<evidence type="ECO:0000255" key="3">
    <source>
        <dbReference type="PROSITE-ProRule" id="PRU01364"/>
    </source>
</evidence>
<evidence type="ECO:0000269" key="4">
    <source>
    </source>
</evidence>
<evidence type="ECO:0000305" key="5"/>
<feature type="chain" id="PRO_0000319862" description="Replication-associated protein">
    <location>
        <begin position="1"/>
        <end position="289"/>
    </location>
</feature>
<feature type="domain" description="CRESS-DNA virus Rep endonuclease" evidence="3">
    <location>
        <begin position="6"/>
        <end position="103"/>
    </location>
</feature>
<feature type="short sequence motif" description="Nuclear localization signal" evidence="2">
    <location>
        <begin position="4"/>
        <end position="13"/>
    </location>
</feature>
<feature type="short sequence motif" description="RCR-1" evidence="3">
    <location>
        <begin position="13"/>
        <end position="16"/>
    </location>
</feature>
<feature type="short sequence motif" description="RCR-2" evidence="3">
    <location>
        <begin position="51"/>
        <end position="53"/>
    </location>
</feature>
<feature type="short sequence motif" description="Nuclear localization signal" evidence="2">
    <location>
        <begin position="60"/>
        <end position="80"/>
    </location>
</feature>
<feature type="short sequence motif" description="RCR-3" evidence="3">
    <location>
        <begin position="89"/>
        <end position="92"/>
    </location>
</feature>
<feature type="active site" description="For DNA cleavage activity" evidence="3">
    <location>
        <position position="89"/>
    </location>
</feature>
<feature type="binding site" evidence="2">
    <location>
        <position position="43"/>
    </location>
    <ligand>
        <name>a divalent metal cation</name>
        <dbReference type="ChEBI" id="CHEBI:60240"/>
    </ligand>
</feature>
<feature type="binding site" evidence="2">
    <location>
        <position position="51"/>
    </location>
    <ligand>
        <name>a divalent metal cation</name>
        <dbReference type="ChEBI" id="CHEBI:60240"/>
    </ligand>
</feature>
<feature type="binding site" evidence="2">
    <location>
        <position position="93"/>
    </location>
    <ligand>
        <name>a divalent metal cation</name>
        <dbReference type="ChEBI" id="CHEBI:60240"/>
    </ligand>
</feature>
<feature type="binding site" evidence="1">
    <location>
        <begin position="165"/>
        <end position="172"/>
    </location>
    <ligand>
        <name>ATP</name>
        <dbReference type="ChEBI" id="CHEBI:30616"/>
    </ligand>
</feature>